<keyword id="KW-0687">Ribonucleoprotein</keyword>
<keyword id="KW-0689">Ribosomal protein</keyword>
<evidence type="ECO:0000255" key="1">
    <source>
        <dbReference type="HAMAP-Rule" id="MF_00251"/>
    </source>
</evidence>
<evidence type="ECO:0000305" key="2"/>
<name>RL36_NITV9</name>
<dbReference type="EMBL" id="CP001197">
    <property type="protein sequence ID" value="ACL07062.1"/>
    <property type="molecule type" value="Genomic_DNA"/>
</dbReference>
<dbReference type="SMR" id="B8DNK5"/>
<dbReference type="STRING" id="883.DvMF_0101"/>
<dbReference type="KEGG" id="dvm:DvMF_0101"/>
<dbReference type="eggNOG" id="COG0257">
    <property type="taxonomic scope" value="Bacteria"/>
</dbReference>
<dbReference type="HOGENOM" id="CLU_135723_6_2_7"/>
<dbReference type="OrthoDB" id="9802520at2"/>
<dbReference type="GO" id="GO:0005737">
    <property type="term" value="C:cytoplasm"/>
    <property type="evidence" value="ECO:0007669"/>
    <property type="project" value="UniProtKB-ARBA"/>
</dbReference>
<dbReference type="GO" id="GO:1990904">
    <property type="term" value="C:ribonucleoprotein complex"/>
    <property type="evidence" value="ECO:0007669"/>
    <property type="project" value="UniProtKB-KW"/>
</dbReference>
<dbReference type="GO" id="GO:0005840">
    <property type="term" value="C:ribosome"/>
    <property type="evidence" value="ECO:0007669"/>
    <property type="project" value="UniProtKB-KW"/>
</dbReference>
<dbReference type="GO" id="GO:0003735">
    <property type="term" value="F:structural constituent of ribosome"/>
    <property type="evidence" value="ECO:0007669"/>
    <property type="project" value="InterPro"/>
</dbReference>
<dbReference type="GO" id="GO:0006412">
    <property type="term" value="P:translation"/>
    <property type="evidence" value="ECO:0007669"/>
    <property type="project" value="UniProtKB-UniRule"/>
</dbReference>
<dbReference type="HAMAP" id="MF_00251">
    <property type="entry name" value="Ribosomal_bL36"/>
    <property type="match status" value="1"/>
</dbReference>
<dbReference type="InterPro" id="IPR000473">
    <property type="entry name" value="Ribosomal_bL36"/>
</dbReference>
<dbReference type="InterPro" id="IPR035977">
    <property type="entry name" value="Ribosomal_bL36_sp"/>
</dbReference>
<dbReference type="NCBIfam" id="TIGR01022">
    <property type="entry name" value="rpmJ_bact"/>
    <property type="match status" value="1"/>
</dbReference>
<dbReference type="PANTHER" id="PTHR42888">
    <property type="entry name" value="50S RIBOSOMAL PROTEIN L36, CHLOROPLASTIC"/>
    <property type="match status" value="1"/>
</dbReference>
<dbReference type="PANTHER" id="PTHR42888:SF1">
    <property type="entry name" value="LARGE RIBOSOMAL SUBUNIT PROTEIN BL36C"/>
    <property type="match status" value="1"/>
</dbReference>
<dbReference type="Pfam" id="PF00444">
    <property type="entry name" value="Ribosomal_L36"/>
    <property type="match status" value="1"/>
</dbReference>
<dbReference type="SUPFAM" id="SSF57840">
    <property type="entry name" value="Ribosomal protein L36"/>
    <property type="match status" value="1"/>
</dbReference>
<dbReference type="PROSITE" id="PS00828">
    <property type="entry name" value="RIBOSOMAL_L36"/>
    <property type="match status" value="1"/>
</dbReference>
<sequence>MKVRPSVKKMCPKCKVIRRRGILRVICDNPRHKQRQG</sequence>
<comment type="similarity">
    <text evidence="1">Belongs to the bacterial ribosomal protein bL36 family.</text>
</comment>
<gene>
    <name evidence="1" type="primary">rpmJ</name>
    <name type="ordered locus">DvMF_0101</name>
</gene>
<reference key="1">
    <citation type="submission" date="2008-10" db="EMBL/GenBank/DDBJ databases">
        <title>Complete sequence of Desulfovibrio vulgaris str. 'Miyazaki F'.</title>
        <authorList>
            <person name="Lucas S."/>
            <person name="Copeland A."/>
            <person name="Lapidus A."/>
            <person name="Glavina del Rio T."/>
            <person name="Dalin E."/>
            <person name="Tice H."/>
            <person name="Bruce D."/>
            <person name="Goodwin L."/>
            <person name="Pitluck S."/>
            <person name="Sims D."/>
            <person name="Brettin T."/>
            <person name="Detter J.C."/>
            <person name="Han C."/>
            <person name="Larimer F."/>
            <person name="Land M."/>
            <person name="Hauser L."/>
            <person name="Kyrpides N."/>
            <person name="Mikhailova N."/>
            <person name="Hazen T.C."/>
            <person name="Richardson P."/>
        </authorList>
    </citation>
    <scope>NUCLEOTIDE SEQUENCE [LARGE SCALE GENOMIC DNA]</scope>
    <source>
        <strain>DSM 19637 / Miyazaki F</strain>
    </source>
</reference>
<protein>
    <recommendedName>
        <fullName evidence="1">Large ribosomal subunit protein bL36</fullName>
    </recommendedName>
    <alternativeName>
        <fullName evidence="2">50S ribosomal protein L36</fullName>
    </alternativeName>
</protein>
<feature type="chain" id="PRO_1000196187" description="Large ribosomal subunit protein bL36">
    <location>
        <begin position="1"/>
        <end position="37"/>
    </location>
</feature>
<proteinExistence type="inferred from homology"/>
<organism>
    <name type="scientific">Nitratidesulfovibrio vulgaris (strain DSM 19637 / Miyazaki F)</name>
    <name type="common">Desulfovibrio vulgaris</name>
    <dbReference type="NCBI Taxonomy" id="883"/>
    <lineage>
        <taxon>Bacteria</taxon>
        <taxon>Pseudomonadati</taxon>
        <taxon>Thermodesulfobacteriota</taxon>
        <taxon>Desulfovibrionia</taxon>
        <taxon>Desulfovibrionales</taxon>
        <taxon>Desulfovibrionaceae</taxon>
        <taxon>Nitratidesulfovibrio</taxon>
    </lineage>
</organism>
<accession>B8DNK5</accession>